<evidence type="ECO:0000250" key="1"/>
<evidence type="ECO:0000255" key="2"/>
<evidence type="ECO:0000305" key="3"/>
<sequence length="412" mass="45668">MDRRKLIFGKFWLFGLLNNVLYVVILAAAVDIVGPTLPKSLILLADILPSFLVKLVAPFFIDRVEYHYRIWSLIALSGFGMLLVASGRLGVCIVGIVLASISSGVGEITFLQLTHYFSHVALNGWSSGTGGAGLAGSFLYMLLTSILKIPVSRSLLLFSILPIGFLLYFTLQVERTAYEPLASGHFMEAEDNSGSVISLEAPRTTVDNARDCASRPRLAALRERIEVTMRRLKVLVVPYMIPLSTVYLFEYLINQGVSPTLMFPIHEGYGTSQLFHKYRDIYVAYGTLYQLGVFISRSSGSWVRIRGLYLLSVLQFLNLVILLIQSWYYVIHSVWVIMAIVLYEGLLGGASYVNSFLNISEDVPLAEREFSLGAVSISDSSGTLVAAFIGILLEPVLCSHQVKTGRPWCQLE</sequence>
<organism>
    <name type="scientific">Eremothecium gossypii (strain ATCC 10895 / CBS 109.51 / FGSC 9923 / NRRL Y-1056)</name>
    <name type="common">Yeast</name>
    <name type="synonym">Ashbya gossypii</name>
    <dbReference type="NCBI Taxonomy" id="284811"/>
    <lineage>
        <taxon>Eukaryota</taxon>
        <taxon>Fungi</taxon>
        <taxon>Dikarya</taxon>
        <taxon>Ascomycota</taxon>
        <taxon>Saccharomycotina</taxon>
        <taxon>Saccharomycetes</taxon>
        <taxon>Saccharomycetales</taxon>
        <taxon>Saccharomycetaceae</taxon>
        <taxon>Eremothecium</taxon>
    </lineage>
</organism>
<feature type="signal peptide" evidence="2">
    <location>
        <begin position="1"/>
        <end position="29"/>
    </location>
</feature>
<feature type="chain" id="PRO_0000256255" description="Protein BTN1">
    <location>
        <begin position="30"/>
        <end position="412"/>
    </location>
</feature>
<feature type="transmembrane region" description="Helical" evidence="2">
    <location>
        <begin position="41"/>
        <end position="61"/>
    </location>
</feature>
<feature type="transmembrane region" description="Helical" evidence="2">
    <location>
        <begin position="70"/>
        <end position="90"/>
    </location>
</feature>
<feature type="transmembrane region" description="Helical" evidence="2">
    <location>
        <begin position="91"/>
        <end position="111"/>
    </location>
</feature>
<feature type="transmembrane region" description="Helical" evidence="2">
    <location>
        <begin position="131"/>
        <end position="151"/>
    </location>
</feature>
<feature type="transmembrane region" description="Helical" evidence="2">
    <location>
        <begin position="154"/>
        <end position="174"/>
    </location>
</feature>
<feature type="transmembrane region" description="Helical" evidence="2">
    <location>
        <begin position="234"/>
        <end position="254"/>
    </location>
</feature>
<feature type="transmembrane region" description="Helical" evidence="2">
    <location>
        <begin position="281"/>
        <end position="300"/>
    </location>
</feature>
<feature type="transmembrane region" description="Helical" evidence="2">
    <location>
        <begin position="307"/>
        <end position="329"/>
    </location>
</feature>
<feature type="transmembrane region" description="Helical" evidence="2">
    <location>
        <begin position="334"/>
        <end position="356"/>
    </location>
</feature>
<comment type="function">
    <text evidence="1">Involved in vacuolar transport and vacuole pH homeostasis. Also required for cytokinesis (By similarity).</text>
</comment>
<comment type="subcellular location">
    <subcellularLocation>
        <location evidence="1">Vacuole membrane</location>
        <topology evidence="1">Multi-pass membrane protein</topology>
    </subcellularLocation>
</comment>
<comment type="similarity">
    <text evidence="3">Belongs to the battenin family.</text>
</comment>
<keyword id="KW-0029">Amino-acid transport</keyword>
<keyword id="KW-0472">Membrane</keyword>
<keyword id="KW-1185">Reference proteome</keyword>
<keyword id="KW-0732">Signal</keyword>
<keyword id="KW-0812">Transmembrane</keyword>
<keyword id="KW-1133">Transmembrane helix</keyword>
<keyword id="KW-0813">Transport</keyword>
<keyword id="KW-0926">Vacuole</keyword>
<reference key="1">
    <citation type="journal article" date="2004" name="Science">
        <title>The Ashbya gossypii genome as a tool for mapping the ancient Saccharomyces cerevisiae genome.</title>
        <authorList>
            <person name="Dietrich F.S."/>
            <person name="Voegeli S."/>
            <person name="Brachat S."/>
            <person name="Lerch A."/>
            <person name="Gates K."/>
            <person name="Steiner S."/>
            <person name="Mohr C."/>
            <person name="Poehlmann R."/>
            <person name="Luedi P."/>
            <person name="Choi S."/>
            <person name="Wing R.A."/>
            <person name="Flavier A."/>
            <person name="Gaffney T.D."/>
            <person name="Philippsen P."/>
        </authorList>
    </citation>
    <scope>NUCLEOTIDE SEQUENCE [LARGE SCALE GENOMIC DNA]</scope>
    <source>
        <strain>ATCC 10895 / CBS 109.51 / FGSC 9923 / NRRL Y-1056</strain>
    </source>
</reference>
<reference key="2">
    <citation type="journal article" date="2013" name="G3 (Bethesda)">
        <title>Genomes of Ashbya fungi isolated from insects reveal four mating-type loci, numerous translocations, lack of transposons, and distinct gene duplications.</title>
        <authorList>
            <person name="Dietrich F.S."/>
            <person name="Voegeli S."/>
            <person name="Kuo S."/>
            <person name="Philippsen P."/>
        </authorList>
    </citation>
    <scope>GENOME REANNOTATION</scope>
    <source>
        <strain>ATCC 10895 / CBS 109.51 / FGSC 9923 / NRRL Y-1056</strain>
    </source>
</reference>
<protein>
    <recommendedName>
        <fullName>Protein BTN1</fullName>
    </recommendedName>
</protein>
<proteinExistence type="inferred from homology"/>
<dbReference type="EMBL" id="AE016818">
    <property type="protein sequence ID" value="AAS52514.1"/>
    <property type="molecule type" value="Genomic_DNA"/>
</dbReference>
<dbReference type="RefSeq" id="NP_984690.1">
    <property type="nucleotide sequence ID" value="NM_210043.1"/>
</dbReference>
<dbReference type="SMR" id="Q758C3"/>
<dbReference type="FunCoup" id="Q758C3">
    <property type="interactions" value="124"/>
</dbReference>
<dbReference type="STRING" id="284811.Q758C3"/>
<dbReference type="EnsemblFungi" id="AAS52514">
    <property type="protein sequence ID" value="AAS52514"/>
    <property type="gene ID" value="AGOS_AEL171C"/>
</dbReference>
<dbReference type="GeneID" id="4620875"/>
<dbReference type="KEGG" id="ago:AGOS_AEL171C"/>
<dbReference type="eggNOG" id="KOG3880">
    <property type="taxonomic scope" value="Eukaryota"/>
</dbReference>
<dbReference type="HOGENOM" id="CLU_029663_1_2_1"/>
<dbReference type="InParanoid" id="Q758C3"/>
<dbReference type="OMA" id="WLCNWQV"/>
<dbReference type="OrthoDB" id="5965864at2759"/>
<dbReference type="Proteomes" id="UP000000591">
    <property type="component" value="Chromosome V"/>
</dbReference>
<dbReference type="GO" id="GO:0000324">
    <property type="term" value="C:fungal-type vacuole"/>
    <property type="evidence" value="ECO:0007669"/>
    <property type="project" value="EnsemblFungi"/>
</dbReference>
<dbReference type="GO" id="GO:0005774">
    <property type="term" value="C:vacuolar membrane"/>
    <property type="evidence" value="ECO:0007669"/>
    <property type="project" value="UniProtKB-SubCell"/>
</dbReference>
<dbReference type="GO" id="GO:0005773">
    <property type="term" value="C:vacuole"/>
    <property type="evidence" value="ECO:0000318"/>
    <property type="project" value="GO_Central"/>
</dbReference>
<dbReference type="GO" id="GO:1903826">
    <property type="term" value="P:L-arginine transmembrane transport"/>
    <property type="evidence" value="ECO:0007669"/>
    <property type="project" value="EnsemblFungi"/>
</dbReference>
<dbReference type="GO" id="GO:0015819">
    <property type="term" value="P:lysine transport"/>
    <property type="evidence" value="ECO:0007669"/>
    <property type="project" value="EnsemblFungi"/>
</dbReference>
<dbReference type="GO" id="GO:0051453">
    <property type="term" value="P:regulation of intracellular pH"/>
    <property type="evidence" value="ECO:0000318"/>
    <property type="project" value="GO_Central"/>
</dbReference>
<dbReference type="InterPro" id="IPR003492">
    <property type="entry name" value="Battenin_disease_Cln3"/>
</dbReference>
<dbReference type="InterPro" id="IPR018460">
    <property type="entry name" value="Battenin_disease_Cln3_subgr"/>
</dbReference>
<dbReference type="InterPro" id="IPR036259">
    <property type="entry name" value="MFS_trans_sf"/>
</dbReference>
<dbReference type="PANTHER" id="PTHR10981">
    <property type="entry name" value="BATTENIN"/>
    <property type="match status" value="1"/>
</dbReference>
<dbReference type="PANTHER" id="PTHR10981:SF0">
    <property type="entry name" value="BATTENIN"/>
    <property type="match status" value="1"/>
</dbReference>
<dbReference type="Pfam" id="PF02487">
    <property type="entry name" value="CLN3"/>
    <property type="match status" value="1"/>
</dbReference>
<dbReference type="PIRSF" id="PIRSF015974">
    <property type="entry name" value="CLN3_BTN1"/>
    <property type="match status" value="1"/>
</dbReference>
<dbReference type="PRINTS" id="PR01315">
    <property type="entry name" value="BATTENIN"/>
</dbReference>
<dbReference type="SUPFAM" id="SSF103473">
    <property type="entry name" value="MFS general substrate transporter"/>
    <property type="match status" value="1"/>
</dbReference>
<name>BTN1_EREGS</name>
<accession>Q758C3</accession>
<gene>
    <name type="primary">BTN1</name>
    <name type="ordered locus">AEL171C</name>
</gene>